<proteinExistence type="evidence at protein level"/>
<gene>
    <name type="primary">AKNAD1</name>
    <name type="synonym">C1orf62</name>
</gene>
<feature type="chain" id="PRO_0000342470" description="Protein AKNAD1">
    <location>
        <begin position="1"/>
        <end position="836"/>
    </location>
</feature>
<feature type="region of interest" description="Disordered" evidence="2">
    <location>
        <begin position="159"/>
        <end position="248"/>
    </location>
</feature>
<feature type="region of interest" description="Disordered" evidence="2">
    <location>
        <begin position="303"/>
        <end position="325"/>
    </location>
</feature>
<feature type="region of interest" description="Disordered" evidence="2">
    <location>
        <begin position="510"/>
        <end position="545"/>
    </location>
</feature>
<feature type="region of interest" description="Disordered" evidence="2">
    <location>
        <begin position="575"/>
        <end position="596"/>
    </location>
</feature>
<feature type="coiled-coil region" evidence="1">
    <location>
        <begin position="372"/>
        <end position="484"/>
    </location>
</feature>
<feature type="compositionally biased region" description="Polar residues" evidence="2">
    <location>
        <begin position="159"/>
        <end position="172"/>
    </location>
</feature>
<feature type="compositionally biased region" description="Polar residues" evidence="2">
    <location>
        <begin position="181"/>
        <end position="192"/>
    </location>
</feature>
<feature type="compositionally biased region" description="Polar residues" evidence="2">
    <location>
        <begin position="227"/>
        <end position="248"/>
    </location>
</feature>
<feature type="compositionally biased region" description="Basic and acidic residues" evidence="2">
    <location>
        <begin position="311"/>
        <end position="323"/>
    </location>
</feature>
<feature type="splice variant" id="VSP_034460" description="In isoform 2." evidence="9">
    <location>
        <begin position="416"/>
        <end position="836"/>
    </location>
</feature>
<feature type="splice variant" id="VSP_034461" description="In isoform 3." evidence="8">
    <location>
        <begin position="513"/>
        <end position="582"/>
    </location>
</feature>
<feature type="splice variant" id="VSP_034462" description="In isoform 3." evidence="8">
    <location>
        <begin position="723"/>
        <end position="836"/>
    </location>
</feature>
<feature type="splice variant" id="VSP_034463" description="In isoform 4." evidence="10">
    <original>FLKPKRICSQRVNSKSFKGEHEPTPGKKKLQAFMTYSSDP</original>
    <variation>LASPFCCPGLVHSPDTSKSSPTSGWQEAELGLENMKSQ</variation>
    <location>
        <begin position="724"/>
        <end position="763"/>
    </location>
</feature>
<feature type="splice variant" id="VSP_034464" description="In isoform 4." evidence="10">
    <location>
        <begin position="764"/>
        <end position="836"/>
    </location>
</feature>
<feature type="sequence variant" id="VAR_044198" description="In dbSNP:rs1277207." evidence="3 5 6">
    <original>S</original>
    <variation>N</variation>
    <location>
        <position position="61"/>
    </location>
</feature>
<feature type="sequence variant" id="VAR_044199" description="In dbSNP:rs17621411.">
    <original>A</original>
    <variation>V</variation>
    <location>
        <position position="104"/>
    </location>
</feature>
<feature type="sequence variant" id="VAR_044200" description="In dbSNP:rs17852793." evidence="4">
    <original>E</original>
    <variation>G</variation>
    <location>
        <position position="167"/>
    </location>
</feature>
<feature type="sequence variant" id="VAR_044201" description="In dbSNP:rs9440631.">
    <original>H</original>
    <variation>Y</variation>
    <location>
        <position position="255"/>
    </location>
</feature>
<feature type="sequence variant" id="VAR_044202" description="In dbSNP:rs11580913.">
    <original>L</original>
    <variation>V</variation>
    <location>
        <position position="352"/>
    </location>
</feature>
<feature type="sequence variant" id="VAR_061565" description="In dbSNP:rs12060255.">
    <original>G</original>
    <variation>V</variation>
    <location>
        <position position="582"/>
    </location>
</feature>
<feature type="sequence variant" id="VAR_044203" description="In dbSNP:rs7551421." evidence="5">
    <original>N</original>
    <variation>K</variation>
    <location>
        <position position="616"/>
    </location>
</feature>
<feature type="sequence variant" id="VAR_044204" description="In dbSNP:rs7522157." evidence="7">
    <original>C</original>
    <variation>Y</variation>
    <location>
        <position position="654"/>
    </location>
</feature>
<feature type="sequence conflict" description="In Ref. 2; AL832216." evidence="11" ref="2">
    <original>T</original>
    <variation>M</variation>
    <location>
        <position position="306"/>
    </location>
</feature>
<feature type="sequence conflict" description="In Ref. 2; AL832216." evidence="11" ref="2">
    <original>T</original>
    <variation>A</variation>
    <location>
        <position position="505"/>
    </location>
</feature>
<feature type="sequence conflict" description="In Ref. 6; AA527539." evidence="11" ref="6">
    <original>P</original>
    <variation>A</variation>
    <location>
        <position position="645"/>
    </location>
</feature>
<feature type="sequence conflict" description="In Ref. 6; AA527539." evidence="11" ref="6">
    <original>F</original>
    <variation>L</variation>
    <location>
        <position position="653"/>
    </location>
</feature>
<organism>
    <name type="scientific">Homo sapiens</name>
    <name type="common">Human</name>
    <dbReference type="NCBI Taxonomy" id="9606"/>
    <lineage>
        <taxon>Eukaryota</taxon>
        <taxon>Metazoa</taxon>
        <taxon>Chordata</taxon>
        <taxon>Craniata</taxon>
        <taxon>Vertebrata</taxon>
        <taxon>Euteleostomi</taxon>
        <taxon>Mammalia</taxon>
        <taxon>Eutheria</taxon>
        <taxon>Euarchontoglires</taxon>
        <taxon>Primates</taxon>
        <taxon>Haplorrhini</taxon>
        <taxon>Catarrhini</taxon>
        <taxon>Hominidae</taxon>
        <taxon>Homo</taxon>
    </lineage>
</organism>
<protein>
    <recommendedName>
        <fullName>Protein AKNAD1</fullName>
    </recommendedName>
</protein>
<comment type="interaction">
    <interactant intactId="EBI-18898519">
        <id>Q5T1N1-2</id>
    </interactant>
    <interactant intactId="EBI-6165891">
        <id>Q14696</id>
        <label>MESD</label>
    </interactant>
    <organismsDiffer>false</organismsDiffer>
    <experiments>3</experiments>
</comment>
<comment type="alternative products">
    <event type="alternative splicing"/>
    <isoform>
        <id>Q5T1N1-1</id>
        <name>1</name>
        <sequence type="displayed"/>
    </isoform>
    <isoform>
        <id>Q5T1N1-2</id>
        <name>2</name>
        <sequence type="described" ref="VSP_034460"/>
    </isoform>
    <isoform>
        <id>Q5T1N1-3</id>
        <name>3</name>
        <sequence type="described" ref="VSP_034461 VSP_034462"/>
    </isoform>
    <isoform>
        <id>Q5T1N1-4</id>
        <name>4</name>
        <sequence type="described" ref="VSP_034463 VSP_034464"/>
    </isoform>
</comment>
<comment type="similarity">
    <text evidence="11">Belongs to the AKNA family.</text>
</comment>
<dbReference type="EMBL" id="AK095517">
    <property type="protein sequence ID" value="BAC04565.1"/>
    <property type="molecule type" value="mRNA"/>
</dbReference>
<dbReference type="EMBL" id="AL832216">
    <property type="status" value="NOT_ANNOTATED_CDS"/>
    <property type="molecule type" value="mRNA"/>
</dbReference>
<dbReference type="EMBL" id="AL449266">
    <property type="status" value="NOT_ANNOTATED_CDS"/>
    <property type="molecule type" value="Genomic_DNA"/>
</dbReference>
<dbReference type="EMBL" id="CH471122">
    <property type="protein sequence ID" value="EAW56334.1"/>
    <property type="molecule type" value="Genomic_DNA"/>
</dbReference>
<dbReference type="EMBL" id="CH471122">
    <property type="protein sequence ID" value="EAW56335.1"/>
    <property type="molecule type" value="Genomic_DNA"/>
</dbReference>
<dbReference type="EMBL" id="BC030647">
    <property type="protein sequence ID" value="AAH30647.1"/>
    <property type="molecule type" value="mRNA"/>
</dbReference>
<dbReference type="EMBL" id="BC150642">
    <property type="protein sequence ID" value="AAI50643.1"/>
    <property type="molecule type" value="mRNA"/>
</dbReference>
<dbReference type="EMBL" id="AA527539">
    <property type="status" value="NOT_ANNOTATED_CDS"/>
    <property type="molecule type" value="mRNA"/>
</dbReference>
<dbReference type="CCDS" id="CCDS791.2">
    <molecule id="Q5T1N1-1"/>
</dbReference>
<dbReference type="RefSeq" id="NP_689976.2">
    <molecule id="Q5T1N1-1"/>
    <property type="nucleotide sequence ID" value="NM_152763.5"/>
</dbReference>
<dbReference type="SMR" id="Q5T1N1"/>
<dbReference type="BioGRID" id="129027">
    <property type="interactions" value="13"/>
</dbReference>
<dbReference type="FunCoup" id="Q5T1N1">
    <property type="interactions" value="13"/>
</dbReference>
<dbReference type="IntAct" id="Q5T1N1">
    <property type="interactions" value="9"/>
</dbReference>
<dbReference type="STRING" id="9606.ENSP00000359018"/>
<dbReference type="GlyGen" id="Q5T1N1">
    <property type="glycosylation" value="2 sites, 1 O-linked glycan (1 site)"/>
</dbReference>
<dbReference type="iPTMnet" id="Q5T1N1"/>
<dbReference type="PhosphoSitePlus" id="Q5T1N1"/>
<dbReference type="BioMuta" id="AKNAD1"/>
<dbReference type="DMDM" id="317373483"/>
<dbReference type="MassIVE" id="Q5T1N1"/>
<dbReference type="PaxDb" id="9606-ENSP00000359018"/>
<dbReference type="PeptideAtlas" id="Q5T1N1"/>
<dbReference type="ProteomicsDB" id="64274">
    <molecule id="Q5T1N1-1"/>
</dbReference>
<dbReference type="ProteomicsDB" id="64277">
    <molecule id="Q5T1N1-4"/>
</dbReference>
<dbReference type="Antibodypedia" id="33737">
    <property type="antibodies" value="27 antibodies from 9 providers"/>
</dbReference>
<dbReference type="DNASU" id="254268"/>
<dbReference type="Ensembl" id="ENST00000369995.7">
    <molecule id="Q5T1N1-4"/>
    <property type="protein sequence ID" value="ENSP00000359012.3"/>
    <property type="gene ID" value="ENSG00000162641.20"/>
</dbReference>
<dbReference type="Ensembl" id="ENST00000370001.8">
    <molecule id="Q5T1N1-1"/>
    <property type="protein sequence ID" value="ENSP00000359018.3"/>
    <property type="gene ID" value="ENSG00000162641.20"/>
</dbReference>
<dbReference type="Ensembl" id="ENST00000472781.2">
    <molecule id="Q5T1N1-2"/>
    <property type="protein sequence ID" value="ENSP00000432262.1"/>
    <property type="gene ID" value="ENSG00000162641.20"/>
</dbReference>
<dbReference type="Ensembl" id="ENST00000474186.5">
    <molecule id="Q5T1N1-3"/>
    <property type="protein sequence ID" value="ENSP00000436835.1"/>
    <property type="gene ID" value="ENSG00000162641.20"/>
</dbReference>
<dbReference type="GeneID" id="254268"/>
<dbReference type="KEGG" id="hsa:254268"/>
<dbReference type="MANE-Select" id="ENST00000370001.8">
    <property type="protein sequence ID" value="ENSP00000359018.3"/>
    <property type="RefSeq nucleotide sequence ID" value="NM_152763.5"/>
    <property type="RefSeq protein sequence ID" value="NP_689976.2"/>
</dbReference>
<dbReference type="UCSC" id="uc001dwa.5">
    <molecule id="Q5T1N1-1"/>
    <property type="organism name" value="human"/>
</dbReference>
<dbReference type="AGR" id="HGNC:28398"/>
<dbReference type="CTD" id="254268"/>
<dbReference type="DisGeNET" id="254268"/>
<dbReference type="GeneCards" id="AKNAD1"/>
<dbReference type="HGNC" id="HGNC:28398">
    <property type="gene designation" value="AKNAD1"/>
</dbReference>
<dbReference type="HPA" id="ENSG00000162641">
    <property type="expression patterns" value="Tissue enriched (testis)"/>
</dbReference>
<dbReference type="neXtProt" id="NX_Q5T1N1"/>
<dbReference type="OpenTargets" id="ENSG00000162641"/>
<dbReference type="PharmGKB" id="PA165750356"/>
<dbReference type="VEuPathDB" id="HostDB:ENSG00000162641"/>
<dbReference type="eggNOG" id="ENOG502RZDD">
    <property type="taxonomic scope" value="Eukaryota"/>
</dbReference>
<dbReference type="GeneTree" id="ENSGT00940000154254"/>
<dbReference type="HOGENOM" id="CLU_021210_0_0_1"/>
<dbReference type="InParanoid" id="Q5T1N1"/>
<dbReference type="OMA" id="EPTIHIH"/>
<dbReference type="OrthoDB" id="9045614at2759"/>
<dbReference type="PAN-GO" id="Q5T1N1">
    <property type="GO annotations" value="0 GO annotations based on evolutionary models"/>
</dbReference>
<dbReference type="PhylomeDB" id="Q5T1N1"/>
<dbReference type="TreeFam" id="TF335786"/>
<dbReference type="PathwayCommons" id="Q5T1N1"/>
<dbReference type="SignaLink" id="Q5T1N1"/>
<dbReference type="BioGRID-ORCS" id="254268">
    <property type="hits" value="11 hits in 1135 CRISPR screens"/>
</dbReference>
<dbReference type="GenomeRNAi" id="254268"/>
<dbReference type="Pharos" id="Q5T1N1">
    <property type="development level" value="Tdark"/>
</dbReference>
<dbReference type="PRO" id="PR:Q5T1N1"/>
<dbReference type="Proteomes" id="UP000005640">
    <property type="component" value="Chromosome 1"/>
</dbReference>
<dbReference type="RNAct" id="Q5T1N1">
    <property type="molecule type" value="protein"/>
</dbReference>
<dbReference type="Bgee" id="ENSG00000162641">
    <property type="expression patterns" value="Expressed in male germ line stem cell (sensu Vertebrata) in testis and 100 other cell types or tissues"/>
</dbReference>
<dbReference type="ExpressionAtlas" id="Q5T1N1">
    <property type="expression patterns" value="baseline and differential"/>
</dbReference>
<dbReference type="InterPro" id="IPR052655">
    <property type="entry name" value="AKNA_Centrosome-Trans_reg"/>
</dbReference>
<dbReference type="InterPro" id="IPR022150">
    <property type="entry name" value="AKNA_dom"/>
</dbReference>
<dbReference type="PANTHER" id="PTHR21510">
    <property type="entry name" value="AKNA DOMAIN-CONTAINING PROTEIN"/>
    <property type="match status" value="1"/>
</dbReference>
<dbReference type="PANTHER" id="PTHR21510:SF16">
    <property type="entry name" value="PROTEIN AKNAD1"/>
    <property type="match status" value="1"/>
</dbReference>
<dbReference type="Pfam" id="PF12443">
    <property type="entry name" value="AKNA"/>
    <property type="match status" value="1"/>
</dbReference>
<reference key="1">
    <citation type="journal article" date="2004" name="Nat. Genet.">
        <title>Complete sequencing and characterization of 21,243 full-length human cDNAs.</title>
        <authorList>
            <person name="Ota T."/>
            <person name="Suzuki Y."/>
            <person name="Nishikawa T."/>
            <person name="Otsuki T."/>
            <person name="Sugiyama T."/>
            <person name="Irie R."/>
            <person name="Wakamatsu A."/>
            <person name="Hayashi K."/>
            <person name="Sato H."/>
            <person name="Nagai K."/>
            <person name="Kimura K."/>
            <person name="Makita H."/>
            <person name="Sekine M."/>
            <person name="Obayashi M."/>
            <person name="Nishi T."/>
            <person name="Shibahara T."/>
            <person name="Tanaka T."/>
            <person name="Ishii S."/>
            <person name="Yamamoto J."/>
            <person name="Saito K."/>
            <person name="Kawai Y."/>
            <person name="Isono Y."/>
            <person name="Nakamura Y."/>
            <person name="Nagahari K."/>
            <person name="Murakami K."/>
            <person name="Yasuda T."/>
            <person name="Iwayanagi T."/>
            <person name="Wagatsuma M."/>
            <person name="Shiratori A."/>
            <person name="Sudo H."/>
            <person name="Hosoiri T."/>
            <person name="Kaku Y."/>
            <person name="Kodaira H."/>
            <person name="Kondo H."/>
            <person name="Sugawara M."/>
            <person name="Takahashi M."/>
            <person name="Kanda K."/>
            <person name="Yokoi T."/>
            <person name="Furuya T."/>
            <person name="Kikkawa E."/>
            <person name="Omura Y."/>
            <person name="Abe K."/>
            <person name="Kamihara K."/>
            <person name="Katsuta N."/>
            <person name="Sato K."/>
            <person name="Tanikawa M."/>
            <person name="Yamazaki M."/>
            <person name="Ninomiya K."/>
            <person name="Ishibashi T."/>
            <person name="Yamashita H."/>
            <person name="Murakawa K."/>
            <person name="Fujimori K."/>
            <person name="Tanai H."/>
            <person name="Kimata M."/>
            <person name="Watanabe M."/>
            <person name="Hiraoka S."/>
            <person name="Chiba Y."/>
            <person name="Ishida S."/>
            <person name="Ono Y."/>
            <person name="Takiguchi S."/>
            <person name="Watanabe S."/>
            <person name="Yosida M."/>
            <person name="Hotuta T."/>
            <person name="Kusano J."/>
            <person name="Kanehori K."/>
            <person name="Takahashi-Fujii A."/>
            <person name="Hara H."/>
            <person name="Tanase T.-O."/>
            <person name="Nomura Y."/>
            <person name="Togiya S."/>
            <person name="Komai F."/>
            <person name="Hara R."/>
            <person name="Takeuchi K."/>
            <person name="Arita M."/>
            <person name="Imose N."/>
            <person name="Musashino K."/>
            <person name="Yuuki H."/>
            <person name="Oshima A."/>
            <person name="Sasaki N."/>
            <person name="Aotsuka S."/>
            <person name="Yoshikawa Y."/>
            <person name="Matsunawa H."/>
            <person name="Ichihara T."/>
            <person name="Shiohata N."/>
            <person name="Sano S."/>
            <person name="Moriya S."/>
            <person name="Momiyama H."/>
            <person name="Satoh N."/>
            <person name="Takami S."/>
            <person name="Terashima Y."/>
            <person name="Suzuki O."/>
            <person name="Nakagawa S."/>
            <person name="Senoh A."/>
            <person name="Mizoguchi H."/>
            <person name="Goto Y."/>
            <person name="Shimizu F."/>
            <person name="Wakebe H."/>
            <person name="Hishigaki H."/>
            <person name="Watanabe T."/>
            <person name="Sugiyama A."/>
            <person name="Takemoto M."/>
            <person name="Kawakami B."/>
            <person name="Yamazaki M."/>
            <person name="Watanabe K."/>
            <person name="Kumagai A."/>
            <person name="Itakura S."/>
            <person name="Fukuzumi Y."/>
            <person name="Fujimori Y."/>
            <person name="Komiyama M."/>
            <person name="Tashiro H."/>
            <person name="Tanigami A."/>
            <person name="Fujiwara T."/>
            <person name="Ono T."/>
            <person name="Yamada K."/>
            <person name="Fujii Y."/>
            <person name="Ozaki K."/>
            <person name="Hirao M."/>
            <person name="Ohmori Y."/>
            <person name="Kawabata A."/>
            <person name="Hikiji T."/>
            <person name="Kobatake N."/>
            <person name="Inagaki H."/>
            <person name="Ikema Y."/>
            <person name="Okamoto S."/>
            <person name="Okitani R."/>
            <person name="Kawakami T."/>
            <person name="Noguchi S."/>
            <person name="Itoh T."/>
            <person name="Shigeta K."/>
            <person name="Senba T."/>
            <person name="Matsumura K."/>
            <person name="Nakajima Y."/>
            <person name="Mizuno T."/>
            <person name="Morinaga M."/>
            <person name="Sasaki M."/>
            <person name="Togashi T."/>
            <person name="Oyama M."/>
            <person name="Hata H."/>
            <person name="Watanabe M."/>
            <person name="Komatsu T."/>
            <person name="Mizushima-Sugano J."/>
            <person name="Satoh T."/>
            <person name="Shirai Y."/>
            <person name="Takahashi Y."/>
            <person name="Nakagawa K."/>
            <person name="Okumura K."/>
            <person name="Nagase T."/>
            <person name="Nomura N."/>
            <person name="Kikuchi H."/>
            <person name="Masuho Y."/>
            <person name="Yamashita R."/>
            <person name="Nakai K."/>
            <person name="Yada T."/>
            <person name="Nakamura Y."/>
            <person name="Ohara O."/>
            <person name="Isogai T."/>
            <person name="Sugano S."/>
        </authorList>
    </citation>
    <scope>NUCLEOTIDE SEQUENCE [LARGE SCALE MRNA] (ISOFORM 3)</scope>
    <scope>VARIANT ASN-61</scope>
    <source>
        <tissue>Brain</tissue>
    </source>
</reference>
<reference key="2">
    <citation type="journal article" date="2007" name="BMC Genomics">
        <title>The full-ORF clone resource of the German cDNA consortium.</title>
        <authorList>
            <person name="Bechtel S."/>
            <person name="Rosenfelder H."/>
            <person name="Duda A."/>
            <person name="Schmidt C.P."/>
            <person name="Ernst U."/>
            <person name="Wellenreuther R."/>
            <person name="Mehrle A."/>
            <person name="Schuster C."/>
            <person name="Bahr A."/>
            <person name="Bloecker H."/>
            <person name="Heubner D."/>
            <person name="Hoerlein A."/>
            <person name="Michel G."/>
            <person name="Wedler H."/>
            <person name="Koehrer K."/>
            <person name="Ottenwaelder B."/>
            <person name="Poustka A."/>
            <person name="Wiemann S."/>
            <person name="Schupp I."/>
        </authorList>
    </citation>
    <scope>NUCLEOTIDE SEQUENCE [LARGE SCALE MRNA] (ISOFORM 1)</scope>
    <scope>VARIANTS ASN-61 AND LYS-616</scope>
    <source>
        <tissue>Testis</tissue>
    </source>
</reference>
<reference key="3">
    <citation type="journal article" date="2006" name="Nature">
        <title>The DNA sequence and biological annotation of human chromosome 1.</title>
        <authorList>
            <person name="Gregory S.G."/>
            <person name="Barlow K.F."/>
            <person name="McLay K.E."/>
            <person name="Kaul R."/>
            <person name="Swarbreck D."/>
            <person name="Dunham A."/>
            <person name="Scott C.E."/>
            <person name="Howe K.L."/>
            <person name="Woodfine K."/>
            <person name="Spencer C.C.A."/>
            <person name="Jones M.C."/>
            <person name="Gillson C."/>
            <person name="Searle S."/>
            <person name="Zhou Y."/>
            <person name="Kokocinski F."/>
            <person name="McDonald L."/>
            <person name="Evans R."/>
            <person name="Phillips K."/>
            <person name="Atkinson A."/>
            <person name="Cooper R."/>
            <person name="Jones C."/>
            <person name="Hall R.E."/>
            <person name="Andrews T.D."/>
            <person name="Lloyd C."/>
            <person name="Ainscough R."/>
            <person name="Almeida J.P."/>
            <person name="Ambrose K.D."/>
            <person name="Anderson F."/>
            <person name="Andrew R.W."/>
            <person name="Ashwell R.I.S."/>
            <person name="Aubin K."/>
            <person name="Babbage A.K."/>
            <person name="Bagguley C.L."/>
            <person name="Bailey J."/>
            <person name="Beasley H."/>
            <person name="Bethel G."/>
            <person name="Bird C.P."/>
            <person name="Bray-Allen S."/>
            <person name="Brown J.Y."/>
            <person name="Brown A.J."/>
            <person name="Buckley D."/>
            <person name="Burton J."/>
            <person name="Bye J."/>
            <person name="Carder C."/>
            <person name="Chapman J.C."/>
            <person name="Clark S.Y."/>
            <person name="Clarke G."/>
            <person name="Clee C."/>
            <person name="Cobley V."/>
            <person name="Collier R.E."/>
            <person name="Corby N."/>
            <person name="Coville G.J."/>
            <person name="Davies J."/>
            <person name="Deadman R."/>
            <person name="Dunn M."/>
            <person name="Earthrowl M."/>
            <person name="Ellington A.G."/>
            <person name="Errington H."/>
            <person name="Frankish A."/>
            <person name="Frankland J."/>
            <person name="French L."/>
            <person name="Garner P."/>
            <person name="Garnett J."/>
            <person name="Gay L."/>
            <person name="Ghori M.R.J."/>
            <person name="Gibson R."/>
            <person name="Gilby L.M."/>
            <person name="Gillett W."/>
            <person name="Glithero R.J."/>
            <person name="Grafham D.V."/>
            <person name="Griffiths C."/>
            <person name="Griffiths-Jones S."/>
            <person name="Grocock R."/>
            <person name="Hammond S."/>
            <person name="Harrison E.S.I."/>
            <person name="Hart E."/>
            <person name="Haugen E."/>
            <person name="Heath P.D."/>
            <person name="Holmes S."/>
            <person name="Holt K."/>
            <person name="Howden P.J."/>
            <person name="Hunt A.R."/>
            <person name="Hunt S.E."/>
            <person name="Hunter G."/>
            <person name="Isherwood J."/>
            <person name="James R."/>
            <person name="Johnson C."/>
            <person name="Johnson D."/>
            <person name="Joy A."/>
            <person name="Kay M."/>
            <person name="Kershaw J.K."/>
            <person name="Kibukawa M."/>
            <person name="Kimberley A.M."/>
            <person name="King A."/>
            <person name="Knights A.J."/>
            <person name="Lad H."/>
            <person name="Laird G."/>
            <person name="Lawlor S."/>
            <person name="Leongamornlert D.A."/>
            <person name="Lloyd D.M."/>
            <person name="Loveland J."/>
            <person name="Lovell J."/>
            <person name="Lush M.J."/>
            <person name="Lyne R."/>
            <person name="Martin S."/>
            <person name="Mashreghi-Mohammadi M."/>
            <person name="Matthews L."/>
            <person name="Matthews N.S.W."/>
            <person name="McLaren S."/>
            <person name="Milne S."/>
            <person name="Mistry S."/>
            <person name="Moore M.J.F."/>
            <person name="Nickerson T."/>
            <person name="O'Dell C.N."/>
            <person name="Oliver K."/>
            <person name="Palmeiri A."/>
            <person name="Palmer S.A."/>
            <person name="Parker A."/>
            <person name="Patel D."/>
            <person name="Pearce A.V."/>
            <person name="Peck A.I."/>
            <person name="Pelan S."/>
            <person name="Phelps K."/>
            <person name="Phillimore B.J."/>
            <person name="Plumb R."/>
            <person name="Rajan J."/>
            <person name="Raymond C."/>
            <person name="Rouse G."/>
            <person name="Saenphimmachak C."/>
            <person name="Sehra H.K."/>
            <person name="Sheridan E."/>
            <person name="Shownkeen R."/>
            <person name="Sims S."/>
            <person name="Skuce C.D."/>
            <person name="Smith M."/>
            <person name="Steward C."/>
            <person name="Subramanian S."/>
            <person name="Sycamore N."/>
            <person name="Tracey A."/>
            <person name="Tromans A."/>
            <person name="Van Helmond Z."/>
            <person name="Wall M."/>
            <person name="Wallis J.M."/>
            <person name="White S."/>
            <person name="Whitehead S.L."/>
            <person name="Wilkinson J.E."/>
            <person name="Willey D.L."/>
            <person name="Williams H."/>
            <person name="Wilming L."/>
            <person name="Wray P.W."/>
            <person name="Wu Z."/>
            <person name="Coulson A."/>
            <person name="Vaudin M."/>
            <person name="Sulston J.E."/>
            <person name="Durbin R.M."/>
            <person name="Hubbard T."/>
            <person name="Wooster R."/>
            <person name="Dunham I."/>
            <person name="Carter N.P."/>
            <person name="McVean G."/>
            <person name="Ross M.T."/>
            <person name="Harrow J."/>
            <person name="Olson M.V."/>
            <person name="Beck S."/>
            <person name="Rogers J."/>
            <person name="Bentley D.R."/>
        </authorList>
    </citation>
    <scope>NUCLEOTIDE SEQUENCE [LARGE SCALE GENOMIC DNA]</scope>
</reference>
<reference key="4">
    <citation type="submission" date="2005-07" db="EMBL/GenBank/DDBJ databases">
        <authorList>
            <person name="Mural R.J."/>
            <person name="Istrail S."/>
            <person name="Sutton G.G."/>
            <person name="Florea L."/>
            <person name="Halpern A.L."/>
            <person name="Mobarry C.M."/>
            <person name="Lippert R."/>
            <person name="Walenz B."/>
            <person name="Shatkay H."/>
            <person name="Dew I."/>
            <person name="Miller J.R."/>
            <person name="Flanigan M.J."/>
            <person name="Edwards N.J."/>
            <person name="Bolanos R."/>
            <person name="Fasulo D."/>
            <person name="Halldorsson B.V."/>
            <person name="Hannenhalli S."/>
            <person name="Turner R."/>
            <person name="Yooseph S."/>
            <person name="Lu F."/>
            <person name="Nusskern D.R."/>
            <person name="Shue B.C."/>
            <person name="Zheng X.H."/>
            <person name="Zhong F."/>
            <person name="Delcher A.L."/>
            <person name="Huson D.H."/>
            <person name="Kravitz S.A."/>
            <person name="Mouchard L."/>
            <person name="Reinert K."/>
            <person name="Remington K.A."/>
            <person name="Clark A.G."/>
            <person name="Waterman M.S."/>
            <person name="Eichler E.E."/>
            <person name="Adams M.D."/>
            <person name="Hunkapiller M.W."/>
            <person name="Myers E.W."/>
            <person name="Venter J.C."/>
        </authorList>
    </citation>
    <scope>NUCLEOTIDE SEQUENCE [LARGE SCALE GENOMIC DNA]</scope>
    <scope>VARIANT ASN-61</scope>
</reference>
<reference key="5">
    <citation type="journal article" date="2004" name="Genome Res.">
        <title>The status, quality, and expansion of the NIH full-length cDNA project: the Mammalian Gene Collection (MGC).</title>
        <authorList>
            <consortium name="The MGC Project Team"/>
        </authorList>
    </citation>
    <scope>NUCLEOTIDE SEQUENCE [LARGE SCALE MRNA] (ISOFORMS 1 AND 2)</scope>
    <scope>VARIANT GLY-167</scope>
    <source>
        <tissue>Testis</tissue>
    </source>
</reference>
<reference key="6">
    <citation type="submission" date="2000-03" db="EMBL/GenBank/DDBJ databases">
        <authorList>
            <consortium name="The Cancer Genome Anatomy Project (CGAP) at the National Cancer Institute"/>
        </authorList>
    </citation>
    <scope>NUCLEOTIDE SEQUENCE [LARGE SCALE MRNA] OF 636-836 (ISOFORM 4)</scope>
    <scope>VARIANT TYR-654</scope>
    <source>
        <tissue>Colon</tissue>
    </source>
</reference>
<accession>Q5T1N1</accession>
<accession>B9EK62</accession>
<accession>Q5T1N0</accession>
<accession>Q8N990</accession>
<accession>Q8NCN9</accession>
<name>AKND1_HUMAN</name>
<keyword id="KW-0025">Alternative splicing</keyword>
<keyword id="KW-0175">Coiled coil</keyword>
<keyword id="KW-1267">Proteomics identification</keyword>
<keyword id="KW-1185">Reference proteome</keyword>
<evidence type="ECO:0000255" key="1"/>
<evidence type="ECO:0000256" key="2">
    <source>
        <dbReference type="SAM" id="MobiDB-lite"/>
    </source>
</evidence>
<evidence type="ECO:0000269" key="3">
    <source>
    </source>
</evidence>
<evidence type="ECO:0000269" key="4">
    <source>
    </source>
</evidence>
<evidence type="ECO:0000269" key="5">
    <source>
    </source>
</evidence>
<evidence type="ECO:0000269" key="6">
    <source ref="4"/>
</evidence>
<evidence type="ECO:0000269" key="7">
    <source ref="6"/>
</evidence>
<evidence type="ECO:0000303" key="8">
    <source>
    </source>
</evidence>
<evidence type="ECO:0000303" key="9">
    <source>
    </source>
</evidence>
<evidence type="ECO:0000303" key="10">
    <source ref="6"/>
</evidence>
<evidence type="ECO:0000305" key="11"/>
<sequence>MDEADFSEHTTYKQEDLPYDGDLSQIKIGNDYSFTSKKDGLEVLNQIIFIADDPQEKAMHSETCGNTAVTIPLGKITENAANKKDEKEKQCTAALHIPANEGDASKSSISDILLHHLSKEPFLRGQGIDCETLPEISNADSFEEEAIIKSIISCYNKNSWPKEQTPELTDQLNPKRDGENSNKPGSATTTEENTSDLEGPVAAGDSSHQENVNVLTKTKGPGDKQKSYQGQSPQKQQTEKANSGNTFKYGQGQVHYQLPDFSKIAPKVKIPKNKIINKPLAIAKQASFSSKSRDKPTLVQDSLETTPESNCVEKQHQEQKGKITEPSQQIQMEPIVHIHQELLTGIESEASLSKLSPTSQKGTSSSSSYIFQKISQGKQMCQKLKEQTDQLKTKVQEFSKRIKQDSPYHLQDKKLVLEKLQGHLELLEQNFLATKDKHLTLQQQVHKHESTIVGDFDPERKVEGEIFKLEMLLEDVKEKMDESKYTSAPSLPVSSPVTLDDLASTFSSLSNEIPKEHPGHPSGPRGSGGSEVTGTPQGGPQEAPNEELCELAPQTYLNGHYGDAAAQNKPDQVAMRLSSNSGEDPNGTPRRQDCAEMTAPSPSCAFCRRLLEWKQNVEKKGHGRINCGRFSIVLHEKAPHSDSTPNSDTGHSFCSDSGTEMQSNKCQDCGTKIPTSRRACRKEPTKEFHYRYNTPGQNYSNHSKRGAFVQPHSLDESKNSSPSFLKPKRICSQRVNSKSFKGEHEPTPGKKKLQAFMTYSSDPATPSPHFYSCRISGSKSLCDFDSTEEIKSEILNSALDHALRTATILKETTDQMIKTIAEDLAKAQRWRNRLKY</sequence>